<dbReference type="EMBL" id="U18530">
    <property type="protein sequence ID" value="AAB64507.1"/>
    <property type="molecule type" value="Genomic_DNA"/>
</dbReference>
<dbReference type="EMBL" id="BK006939">
    <property type="protein sequence ID" value="DAA07623.1"/>
    <property type="molecule type" value="Genomic_DNA"/>
</dbReference>
<dbReference type="PIR" id="S50429">
    <property type="entry name" value="S50429"/>
</dbReference>
<dbReference type="RefSeq" id="NP_010884.1">
    <property type="nucleotide sequence ID" value="NM_001178845.1"/>
</dbReference>
<dbReference type="SMR" id="P39987"/>
<dbReference type="BioGRID" id="36699">
    <property type="interactions" value="111"/>
</dbReference>
<dbReference type="DIP" id="DIP-6541N"/>
<dbReference type="FunCoup" id="P39987">
    <property type="interactions" value="1275"/>
</dbReference>
<dbReference type="IntAct" id="P39987">
    <property type="interactions" value="19"/>
</dbReference>
<dbReference type="MINT" id="P39987"/>
<dbReference type="STRING" id="4932.YEL030W"/>
<dbReference type="iPTMnet" id="P39987"/>
<dbReference type="PaxDb" id="4932-YEL030W"/>
<dbReference type="PeptideAtlas" id="P39987"/>
<dbReference type="EnsemblFungi" id="YEL030W_mRNA">
    <property type="protein sequence ID" value="YEL030W"/>
    <property type="gene ID" value="YEL030W"/>
</dbReference>
<dbReference type="GeneID" id="856682"/>
<dbReference type="KEGG" id="sce:YEL030W"/>
<dbReference type="AGR" id="SGD:S000000756"/>
<dbReference type="SGD" id="S000000756">
    <property type="gene designation" value="ECM10"/>
</dbReference>
<dbReference type="VEuPathDB" id="FungiDB:YEL030W"/>
<dbReference type="eggNOG" id="KOG0102">
    <property type="taxonomic scope" value="Eukaryota"/>
</dbReference>
<dbReference type="GeneTree" id="ENSGT00920000149123"/>
<dbReference type="HOGENOM" id="CLU_005965_2_1_1"/>
<dbReference type="InParanoid" id="P39987"/>
<dbReference type="OMA" id="KHIRMPF"/>
<dbReference type="OrthoDB" id="2401965at2759"/>
<dbReference type="BioCyc" id="YEAST:G3O-30152-MONOMER"/>
<dbReference type="BioGRID-ORCS" id="856682">
    <property type="hits" value="1 hit in 10 CRISPR screens"/>
</dbReference>
<dbReference type="PRO" id="PR:P39987"/>
<dbReference type="Proteomes" id="UP000002311">
    <property type="component" value="Chromosome V"/>
</dbReference>
<dbReference type="RNAct" id="P39987">
    <property type="molecule type" value="protein"/>
</dbReference>
<dbReference type="GO" id="GO:0005737">
    <property type="term" value="C:cytoplasm"/>
    <property type="evidence" value="ECO:0000318"/>
    <property type="project" value="GO_Central"/>
</dbReference>
<dbReference type="GO" id="GO:0042645">
    <property type="term" value="C:mitochondrial nucleoid"/>
    <property type="evidence" value="ECO:0000314"/>
    <property type="project" value="SGD"/>
</dbReference>
<dbReference type="GO" id="GO:0005739">
    <property type="term" value="C:mitochondrion"/>
    <property type="evidence" value="ECO:0000314"/>
    <property type="project" value="SGD"/>
</dbReference>
<dbReference type="GO" id="GO:0005524">
    <property type="term" value="F:ATP binding"/>
    <property type="evidence" value="ECO:0007669"/>
    <property type="project" value="UniProtKB-KW"/>
</dbReference>
<dbReference type="GO" id="GO:0016887">
    <property type="term" value="F:ATP hydrolysis activity"/>
    <property type="evidence" value="ECO:0000318"/>
    <property type="project" value="GO_Central"/>
</dbReference>
<dbReference type="GO" id="GO:0140662">
    <property type="term" value="F:ATP-dependent protein folding chaperone"/>
    <property type="evidence" value="ECO:0007669"/>
    <property type="project" value="InterPro"/>
</dbReference>
<dbReference type="GO" id="GO:0031072">
    <property type="term" value="F:heat shock protein binding"/>
    <property type="evidence" value="ECO:0000318"/>
    <property type="project" value="GO_Central"/>
</dbReference>
<dbReference type="GO" id="GO:0044183">
    <property type="term" value="F:protein folding chaperone"/>
    <property type="evidence" value="ECO:0000318"/>
    <property type="project" value="GO_Central"/>
</dbReference>
<dbReference type="GO" id="GO:0051082">
    <property type="term" value="F:unfolded protein binding"/>
    <property type="evidence" value="ECO:0007669"/>
    <property type="project" value="InterPro"/>
</dbReference>
<dbReference type="GO" id="GO:0051085">
    <property type="term" value="P:chaperone cofactor-dependent protein refolding"/>
    <property type="evidence" value="ECO:0000318"/>
    <property type="project" value="GO_Central"/>
</dbReference>
<dbReference type="GO" id="GO:0016226">
    <property type="term" value="P:iron-sulfur cluster assembly"/>
    <property type="evidence" value="ECO:0000318"/>
    <property type="project" value="GO_Central"/>
</dbReference>
<dbReference type="GO" id="GO:0042026">
    <property type="term" value="P:protein refolding"/>
    <property type="evidence" value="ECO:0000318"/>
    <property type="project" value="GO_Central"/>
</dbReference>
<dbReference type="GO" id="GO:0006626">
    <property type="term" value="P:protein targeting to mitochondrion"/>
    <property type="evidence" value="ECO:0000314"/>
    <property type="project" value="SGD"/>
</dbReference>
<dbReference type="CDD" id="cd11734">
    <property type="entry name" value="ASKHA_NBD_HSP70_Ssc1_3"/>
    <property type="match status" value="1"/>
</dbReference>
<dbReference type="FunFam" id="2.60.34.10:FF:000014">
    <property type="entry name" value="Chaperone protein DnaK HSP70"/>
    <property type="match status" value="1"/>
</dbReference>
<dbReference type="FunFam" id="3.30.30.30:FF:000003">
    <property type="entry name" value="Heat shock protein 9"/>
    <property type="match status" value="1"/>
</dbReference>
<dbReference type="FunFam" id="1.20.1270.10:FF:000007">
    <property type="entry name" value="Heat shock protein, mitochondrial"/>
    <property type="match status" value="1"/>
</dbReference>
<dbReference type="FunFam" id="3.30.420.40:FF:000004">
    <property type="entry name" value="Molecular chaperone DnaK"/>
    <property type="match status" value="1"/>
</dbReference>
<dbReference type="FunFam" id="3.90.640.10:FF:000003">
    <property type="entry name" value="Molecular chaperone DnaK"/>
    <property type="match status" value="1"/>
</dbReference>
<dbReference type="Gene3D" id="1.20.1270.10">
    <property type="match status" value="1"/>
</dbReference>
<dbReference type="Gene3D" id="3.30.420.40">
    <property type="match status" value="2"/>
</dbReference>
<dbReference type="Gene3D" id="3.90.640.10">
    <property type="entry name" value="Actin, Chain A, domain 4"/>
    <property type="match status" value="1"/>
</dbReference>
<dbReference type="Gene3D" id="2.60.34.10">
    <property type="entry name" value="Substrate Binding Domain Of DNAk, Chain A, domain 1"/>
    <property type="match status" value="1"/>
</dbReference>
<dbReference type="HAMAP" id="MF_00332">
    <property type="entry name" value="DnaK"/>
    <property type="match status" value="1"/>
</dbReference>
<dbReference type="InterPro" id="IPR043129">
    <property type="entry name" value="ATPase_NBD"/>
</dbReference>
<dbReference type="InterPro" id="IPR012725">
    <property type="entry name" value="Chaperone_DnaK"/>
</dbReference>
<dbReference type="InterPro" id="IPR018181">
    <property type="entry name" value="Heat_shock_70_CS"/>
</dbReference>
<dbReference type="InterPro" id="IPR029048">
    <property type="entry name" value="HSP70_C_sf"/>
</dbReference>
<dbReference type="InterPro" id="IPR029047">
    <property type="entry name" value="HSP70_peptide-bd_sf"/>
</dbReference>
<dbReference type="InterPro" id="IPR013126">
    <property type="entry name" value="Hsp_70_fam"/>
</dbReference>
<dbReference type="NCBIfam" id="NF001413">
    <property type="entry name" value="PRK00290.1"/>
    <property type="match status" value="1"/>
</dbReference>
<dbReference type="NCBIfam" id="TIGR02350">
    <property type="entry name" value="prok_dnaK"/>
    <property type="match status" value="1"/>
</dbReference>
<dbReference type="PANTHER" id="PTHR19375">
    <property type="entry name" value="HEAT SHOCK PROTEIN 70KDA"/>
    <property type="match status" value="1"/>
</dbReference>
<dbReference type="Pfam" id="PF00012">
    <property type="entry name" value="HSP70"/>
    <property type="match status" value="1"/>
</dbReference>
<dbReference type="PRINTS" id="PR00301">
    <property type="entry name" value="HEATSHOCK70"/>
</dbReference>
<dbReference type="SUPFAM" id="SSF53067">
    <property type="entry name" value="Actin-like ATPase domain"/>
    <property type="match status" value="2"/>
</dbReference>
<dbReference type="SUPFAM" id="SSF100934">
    <property type="entry name" value="Heat shock protein 70kD (HSP70), C-terminal subdomain"/>
    <property type="match status" value="1"/>
</dbReference>
<dbReference type="SUPFAM" id="SSF100920">
    <property type="entry name" value="Heat shock protein 70kD (HSP70), peptide-binding domain"/>
    <property type="match status" value="1"/>
</dbReference>
<dbReference type="PROSITE" id="PS00297">
    <property type="entry name" value="HSP70_1"/>
    <property type="match status" value="1"/>
</dbReference>
<dbReference type="PROSITE" id="PS00329">
    <property type="entry name" value="HSP70_2"/>
    <property type="match status" value="1"/>
</dbReference>
<dbReference type="PROSITE" id="PS01036">
    <property type="entry name" value="HSP70_3"/>
    <property type="match status" value="1"/>
</dbReference>
<protein>
    <recommendedName>
        <fullName>Heat shock protein SSC3, mitochondrial</fullName>
    </recommendedName>
    <alternativeName>
        <fullName>Extracellular mutant protein 10</fullName>
    </alternativeName>
</protein>
<gene>
    <name type="primary">ECM10</name>
    <name type="synonym">SSC3</name>
    <name type="ordered locus">YEL030W</name>
</gene>
<comment type="function">
    <text evidence="2">Plays a role in facilitating the assembly of some protein complexes inside the mitochondria. It may initiate the events that lead to refolding of imported precursors in the matrix space.</text>
</comment>
<comment type="subcellular location">
    <subcellularLocation>
        <location evidence="2 3">Mitochondrion matrix</location>
        <location evidence="2 3">Mitochondrion nucleoid</location>
    </subcellularLocation>
</comment>
<comment type="similarity">
    <text evidence="4">Belongs to the heat shock protein 70 family.</text>
</comment>
<organism>
    <name type="scientific">Saccharomyces cerevisiae (strain ATCC 204508 / S288c)</name>
    <name type="common">Baker's yeast</name>
    <dbReference type="NCBI Taxonomy" id="559292"/>
    <lineage>
        <taxon>Eukaryota</taxon>
        <taxon>Fungi</taxon>
        <taxon>Dikarya</taxon>
        <taxon>Ascomycota</taxon>
        <taxon>Saccharomycotina</taxon>
        <taxon>Saccharomycetes</taxon>
        <taxon>Saccharomycetales</taxon>
        <taxon>Saccharomycetaceae</taxon>
        <taxon>Saccharomyces</taxon>
    </lineage>
</organism>
<accession>P39987</accession>
<accession>D3DLL9</accession>
<sequence>MLPSWKAFKAHNILRILTRFQSTKIPDAVIGIDLGTTNSAVAIMEGKVPRIIENAEGSRTTPSVVAFTKDGERLVGEPAKRQSVINSENTLFATKRLIGRRFEDAEVQRDINQVPFKIVKHSNGDAWVEARNRTYSPAQIGGFILNKMKETAEAYLAKSVKNAVVTVPAYFNDAQRQATKDAGQIIGLNVLRVVNEPTAAALAYGLDKSEPKVIAVFDLGGGTFDISILDIDNGIFEVKSTNGDTHLGGEDFDIYLLQEIISHFKKETGIDLSNDRMAVQRIREAAEKAKIELSSTLSTEINLPFITADAAGPKHIRMPFSRVQLENITAPLIDRTVDPVKKALKDARITASDISDVLLVGGMSRMPKVADTVKKLFGKDASKAVNPDEAVALGAAIQAAVLSGEVTDVLLLDVTPLSLGIETLGGVFTKLIPRNSTIPNKKSQIFSTAASGQTSVEVKVFQGERELVKDNKLIGNFTLAGIPPAPKGTPQIEVTFDIDANGIINVSAKDLASHKDSSITVAGASGLSDTEIDRMVNEAERYKNQDRARRNAIETANKADQLANDTENSIKEFEGKLDKTDSQRLKDQISSLRELVSRSQAGDEVNDDDVGTKIDNLRTSSMKLFEQLYKNSDNPETKNGRENK</sequence>
<feature type="transit peptide" description="Mitochondrion" evidence="1">
    <location>
        <begin position="1"/>
        <end status="unknown"/>
    </location>
</feature>
<feature type="chain" id="PRO_0000013554" description="Heat shock protein SSC3, mitochondrial">
    <location>
        <begin status="unknown"/>
        <end position="644"/>
    </location>
</feature>
<evidence type="ECO:0000255" key="1"/>
<evidence type="ECO:0000269" key="2">
    <source>
    </source>
</evidence>
<evidence type="ECO:0000269" key="3">
    <source>
    </source>
</evidence>
<evidence type="ECO:0000305" key="4"/>
<proteinExistence type="inferred from homology"/>
<keyword id="KW-0067">ATP-binding</keyword>
<keyword id="KW-0143">Chaperone</keyword>
<keyword id="KW-0496">Mitochondrion</keyword>
<keyword id="KW-1135">Mitochondrion nucleoid</keyword>
<keyword id="KW-0547">Nucleotide-binding</keyword>
<keyword id="KW-1185">Reference proteome</keyword>
<keyword id="KW-0809">Transit peptide</keyword>
<reference key="1">
    <citation type="journal article" date="1997" name="Nature">
        <title>The nucleotide sequence of Saccharomyces cerevisiae chromosome V.</title>
        <authorList>
            <person name="Dietrich F.S."/>
            <person name="Mulligan J.T."/>
            <person name="Hennessy K.M."/>
            <person name="Yelton M.A."/>
            <person name="Allen E."/>
            <person name="Araujo R."/>
            <person name="Aviles E."/>
            <person name="Berno A."/>
            <person name="Brennan T."/>
            <person name="Carpenter J."/>
            <person name="Chen E."/>
            <person name="Cherry J.M."/>
            <person name="Chung E."/>
            <person name="Duncan M."/>
            <person name="Guzman E."/>
            <person name="Hartzell G."/>
            <person name="Hunicke-Smith S."/>
            <person name="Hyman R.W."/>
            <person name="Kayser A."/>
            <person name="Komp C."/>
            <person name="Lashkari D."/>
            <person name="Lew H."/>
            <person name="Lin D."/>
            <person name="Mosedale D."/>
            <person name="Nakahara K."/>
            <person name="Namath A."/>
            <person name="Norgren R."/>
            <person name="Oefner P."/>
            <person name="Oh C."/>
            <person name="Petel F.X."/>
            <person name="Roberts D."/>
            <person name="Sehl P."/>
            <person name="Schramm S."/>
            <person name="Shogren T."/>
            <person name="Smith V."/>
            <person name="Taylor P."/>
            <person name="Wei Y."/>
            <person name="Botstein D."/>
            <person name="Davis R.W."/>
        </authorList>
    </citation>
    <scope>NUCLEOTIDE SEQUENCE [LARGE SCALE GENOMIC DNA]</scope>
    <source>
        <strain>ATCC 204508 / S288c</strain>
    </source>
</reference>
<reference key="2">
    <citation type="journal article" date="2014" name="G3 (Bethesda)">
        <title>The reference genome sequence of Saccharomyces cerevisiae: Then and now.</title>
        <authorList>
            <person name="Engel S.R."/>
            <person name="Dietrich F.S."/>
            <person name="Fisk D.G."/>
            <person name="Binkley G."/>
            <person name="Balakrishnan R."/>
            <person name="Costanzo M.C."/>
            <person name="Dwight S.S."/>
            <person name="Hitz B.C."/>
            <person name="Karra K."/>
            <person name="Nash R.S."/>
            <person name="Weng S."/>
            <person name="Wong E.D."/>
            <person name="Lloyd P."/>
            <person name="Skrzypek M.S."/>
            <person name="Miyasato S.R."/>
            <person name="Simison M."/>
            <person name="Cherry J.M."/>
        </authorList>
    </citation>
    <scope>GENOME REANNOTATION</scope>
    <source>
        <strain>ATCC 204508 / S288c</strain>
    </source>
</reference>
<reference key="3">
    <citation type="journal article" date="2000" name="FEBS Lett.">
        <title>Ecm10, a novel hsp70 homolog in the mitochondrial matrix of the yeast Saccharomyces cerevisiae.</title>
        <authorList>
            <person name="Baumann F."/>
            <person name="Milisav I."/>
            <person name="Neupert W."/>
            <person name="Herrmann J.M."/>
        </authorList>
    </citation>
    <scope>FUNCTION</scope>
    <scope>SUBCELLULAR LOCATION</scope>
</reference>
<reference key="4">
    <citation type="journal article" date="2003" name="Biochem. Biophys. Res. Commun.">
        <title>Ecm10p localizes in yeast mitochondrial nucleoids and its overexpression induces extensive mitochondrial DNA aggregations.</title>
        <authorList>
            <person name="Sakasegawa Y."/>
            <person name="Hachiya N.S."/>
            <person name="Tsukita S."/>
            <person name="Kaneko K."/>
        </authorList>
    </citation>
    <scope>SUBCELLULAR LOCATION</scope>
</reference>
<name>HSP7E_YEAST</name>